<gene>
    <name evidence="1" type="primary">hemL</name>
    <name type="ordered locus">Bcep18194_A4065</name>
</gene>
<keyword id="KW-0963">Cytoplasm</keyword>
<keyword id="KW-0413">Isomerase</keyword>
<keyword id="KW-0627">Porphyrin biosynthesis</keyword>
<keyword id="KW-0663">Pyridoxal phosphate</keyword>
<sequence length="427" mass="45001">MSNNQILFERAQKTIPGGVNSPVRAFRSVGGTPRFVARAQGPYFWDADGKQYIDYIGSWGPMIVGHVHPEVLSAVQNVLADGFSFGAPTEAEIEIAEEICKLVPSIEQVRMVSSGTEATMSALRLARGFTGRSRIVKFEGCYHGHADSLLVKAGSGLLTFGNPTSAGVPADIAKHTTVLEYNNVAALEEAFGAFGDEIAAVIVEPVAGNMNLVRGTPEFLNALRALCTKHGAVLIFDEVMCGFRVALGGAQQHYGITADLTCLGKVIGGGMPAAAFGGRRDIMAHLAPLGGVYQAGTLSGNPIAVAAGLKTLQLIQAPGFYDALTAQTKRLADGLAAEARAAGVPFVADSIGAMFGLYFTERVPTSFAEVTKSDTERFNRFFHLMLDEGVYFAPSAYEAGFVSSTHDDAVIDATLAAARRAFAALAA</sequence>
<reference key="1">
    <citation type="submission" date="2005-10" db="EMBL/GenBank/DDBJ databases">
        <title>Complete sequence of chromosome 1 of Burkholderia sp. 383.</title>
        <authorList>
            <consortium name="US DOE Joint Genome Institute"/>
            <person name="Copeland A."/>
            <person name="Lucas S."/>
            <person name="Lapidus A."/>
            <person name="Barry K."/>
            <person name="Detter J.C."/>
            <person name="Glavina T."/>
            <person name="Hammon N."/>
            <person name="Israni S."/>
            <person name="Pitluck S."/>
            <person name="Chain P."/>
            <person name="Malfatti S."/>
            <person name="Shin M."/>
            <person name="Vergez L."/>
            <person name="Schmutz J."/>
            <person name="Larimer F."/>
            <person name="Land M."/>
            <person name="Kyrpides N."/>
            <person name="Lykidis A."/>
            <person name="Richardson P."/>
        </authorList>
    </citation>
    <scope>NUCLEOTIDE SEQUENCE [LARGE SCALE GENOMIC DNA]</scope>
    <source>
        <strain>ATCC 17760 / DSM 23089 / LMG 22485 / NCIMB 9086 / R18194 / 383</strain>
    </source>
</reference>
<dbReference type="EC" id="5.4.3.8" evidence="1"/>
<dbReference type="EMBL" id="CP000151">
    <property type="protein sequence ID" value="ABB07662.1"/>
    <property type="molecule type" value="Genomic_DNA"/>
</dbReference>
<dbReference type="RefSeq" id="WP_011351243.1">
    <property type="nucleotide sequence ID" value="NC_007510.1"/>
</dbReference>
<dbReference type="SMR" id="Q39IQ4"/>
<dbReference type="GeneID" id="45093961"/>
<dbReference type="KEGG" id="bur:Bcep18194_A4065"/>
<dbReference type="PATRIC" id="fig|482957.22.peg.946"/>
<dbReference type="HOGENOM" id="CLU_016922_1_5_4"/>
<dbReference type="UniPathway" id="UPA00251">
    <property type="reaction ID" value="UER00317"/>
</dbReference>
<dbReference type="Proteomes" id="UP000002705">
    <property type="component" value="Chromosome 1"/>
</dbReference>
<dbReference type="GO" id="GO:0005737">
    <property type="term" value="C:cytoplasm"/>
    <property type="evidence" value="ECO:0007669"/>
    <property type="project" value="UniProtKB-SubCell"/>
</dbReference>
<dbReference type="GO" id="GO:0042286">
    <property type="term" value="F:glutamate-1-semialdehyde 2,1-aminomutase activity"/>
    <property type="evidence" value="ECO:0007669"/>
    <property type="project" value="UniProtKB-UniRule"/>
</dbReference>
<dbReference type="GO" id="GO:0030170">
    <property type="term" value="F:pyridoxal phosphate binding"/>
    <property type="evidence" value="ECO:0007669"/>
    <property type="project" value="InterPro"/>
</dbReference>
<dbReference type="GO" id="GO:0008483">
    <property type="term" value="F:transaminase activity"/>
    <property type="evidence" value="ECO:0007669"/>
    <property type="project" value="InterPro"/>
</dbReference>
<dbReference type="GO" id="GO:0006782">
    <property type="term" value="P:protoporphyrinogen IX biosynthetic process"/>
    <property type="evidence" value="ECO:0007669"/>
    <property type="project" value="UniProtKB-UniRule"/>
</dbReference>
<dbReference type="CDD" id="cd00610">
    <property type="entry name" value="OAT_like"/>
    <property type="match status" value="1"/>
</dbReference>
<dbReference type="FunFam" id="3.40.640.10:FF:000021">
    <property type="entry name" value="Glutamate-1-semialdehyde 2,1-aminomutase"/>
    <property type="match status" value="1"/>
</dbReference>
<dbReference type="Gene3D" id="3.90.1150.10">
    <property type="entry name" value="Aspartate Aminotransferase, domain 1"/>
    <property type="match status" value="1"/>
</dbReference>
<dbReference type="Gene3D" id="3.40.640.10">
    <property type="entry name" value="Type I PLP-dependent aspartate aminotransferase-like (Major domain)"/>
    <property type="match status" value="1"/>
</dbReference>
<dbReference type="HAMAP" id="MF_00375">
    <property type="entry name" value="HemL_aminotrans_3"/>
    <property type="match status" value="1"/>
</dbReference>
<dbReference type="InterPro" id="IPR004639">
    <property type="entry name" value="4pyrrol_synth_GluAld_NH2Trfase"/>
</dbReference>
<dbReference type="InterPro" id="IPR005814">
    <property type="entry name" value="Aminotrans_3"/>
</dbReference>
<dbReference type="InterPro" id="IPR049704">
    <property type="entry name" value="Aminotrans_3_PPA_site"/>
</dbReference>
<dbReference type="InterPro" id="IPR015424">
    <property type="entry name" value="PyrdxlP-dep_Trfase"/>
</dbReference>
<dbReference type="InterPro" id="IPR015421">
    <property type="entry name" value="PyrdxlP-dep_Trfase_major"/>
</dbReference>
<dbReference type="InterPro" id="IPR015422">
    <property type="entry name" value="PyrdxlP-dep_Trfase_small"/>
</dbReference>
<dbReference type="NCBIfam" id="TIGR00713">
    <property type="entry name" value="hemL"/>
    <property type="match status" value="1"/>
</dbReference>
<dbReference type="NCBIfam" id="NF000818">
    <property type="entry name" value="PRK00062.1"/>
    <property type="match status" value="1"/>
</dbReference>
<dbReference type="PANTHER" id="PTHR43713">
    <property type="entry name" value="GLUTAMATE-1-SEMIALDEHYDE 2,1-AMINOMUTASE"/>
    <property type="match status" value="1"/>
</dbReference>
<dbReference type="PANTHER" id="PTHR43713:SF3">
    <property type="entry name" value="GLUTAMATE-1-SEMIALDEHYDE 2,1-AMINOMUTASE 1, CHLOROPLASTIC-RELATED"/>
    <property type="match status" value="1"/>
</dbReference>
<dbReference type="Pfam" id="PF00202">
    <property type="entry name" value="Aminotran_3"/>
    <property type="match status" value="1"/>
</dbReference>
<dbReference type="SUPFAM" id="SSF53383">
    <property type="entry name" value="PLP-dependent transferases"/>
    <property type="match status" value="1"/>
</dbReference>
<dbReference type="PROSITE" id="PS00600">
    <property type="entry name" value="AA_TRANSFER_CLASS_3"/>
    <property type="match status" value="1"/>
</dbReference>
<feature type="chain" id="PRO_0000243557" description="Glutamate-1-semialdehyde 2,1-aminomutase">
    <location>
        <begin position="1"/>
        <end position="427"/>
    </location>
</feature>
<feature type="modified residue" description="N6-(pyridoxal phosphate)lysine" evidence="1">
    <location>
        <position position="265"/>
    </location>
</feature>
<organism>
    <name type="scientific">Burkholderia lata (strain ATCC 17760 / DSM 23089 / LMG 22485 / NCIMB 9086 / R18194 / 383)</name>
    <dbReference type="NCBI Taxonomy" id="482957"/>
    <lineage>
        <taxon>Bacteria</taxon>
        <taxon>Pseudomonadati</taxon>
        <taxon>Pseudomonadota</taxon>
        <taxon>Betaproteobacteria</taxon>
        <taxon>Burkholderiales</taxon>
        <taxon>Burkholderiaceae</taxon>
        <taxon>Burkholderia</taxon>
        <taxon>Burkholderia cepacia complex</taxon>
    </lineage>
</organism>
<accession>Q39IQ4</accession>
<protein>
    <recommendedName>
        <fullName evidence="1">Glutamate-1-semialdehyde 2,1-aminomutase</fullName>
        <shortName evidence="1">GSA</shortName>
        <ecNumber evidence="1">5.4.3.8</ecNumber>
    </recommendedName>
    <alternativeName>
        <fullName evidence="1">Glutamate-1-semialdehyde aminotransferase</fullName>
        <shortName evidence="1">GSA-AT</shortName>
    </alternativeName>
</protein>
<proteinExistence type="inferred from homology"/>
<name>GSA_BURL3</name>
<evidence type="ECO:0000255" key="1">
    <source>
        <dbReference type="HAMAP-Rule" id="MF_00375"/>
    </source>
</evidence>
<comment type="catalytic activity">
    <reaction evidence="1">
        <text>(S)-4-amino-5-oxopentanoate = 5-aminolevulinate</text>
        <dbReference type="Rhea" id="RHEA:14265"/>
        <dbReference type="ChEBI" id="CHEBI:57501"/>
        <dbReference type="ChEBI" id="CHEBI:356416"/>
        <dbReference type="EC" id="5.4.3.8"/>
    </reaction>
</comment>
<comment type="cofactor">
    <cofactor evidence="1">
        <name>pyridoxal 5'-phosphate</name>
        <dbReference type="ChEBI" id="CHEBI:597326"/>
    </cofactor>
</comment>
<comment type="pathway">
    <text evidence="1">Porphyrin-containing compound metabolism; protoporphyrin-IX biosynthesis; 5-aminolevulinate from L-glutamyl-tRNA(Glu): step 2/2.</text>
</comment>
<comment type="subunit">
    <text evidence="1">Homodimer.</text>
</comment>
<comment type="subcellular location">
    <subcellularLocation>
        <location evidence="1">Cytoplasm</location>
    </subcellularLocation>
</comment>
<comment type="similarity">
    <text evidence="1">Belongs to the class-III pyridoxal-phosphate-dependent aminotransferase family. HemL subfamily.</text>
</comment>